<sequence>MGDSHEDTSATVPEAVAEEVSLFSTTDIVLFSLIVGVLTYWFIFKKKKEEIPEFSKIQTTAPPVKESSFVEKMKKTGRNIIVFYGSQTGTAEEFANRLSKDAHRYGMRGMSADPEEYDLADLSSLPEIDKSLVVFCMATYGEGDPTDNAQDFYDWLQETDVDLTGVKFAVFGLGNKTYEHFNAMGKYVDQRLEQLGAQRIFELGLGDDDGNLEEDFITWREQFWPAVCEFFGVEATGEESSIRQYELVVHEDMDTAKVYTGEMGRLKSYENQKPPFDAKNPFLAAVTTNRKLNQGTERHLMHLELDISDSKIRYESGDHVAVYPANDSTLVNQIGEILGADLDVIMSLNNLDEESNKKHPFPCPTTYRTALTYYLDITNPPRTNVLYELAQYASEPSEQEHLHKMASSSGEGKELYLSWVVEARRHILAILQDYPSLRPPIDHLCELLPRLQARYYSIASSSKVHPNSVHICAVAVEYEAKSGRVNKGVATSWLRTKEPAGENGRRALVPMFVRKSQFRLPFKPTTPVIMVGPGTGVAPFMGFIQERAWLREQGKEVGETLLYYGCRRSDEDYLYREELARFHKDGALTQLNVAFSREQAHKVYVQHLLKRDKEHLWKLIHEGGAHIYVCGDARNMAKDVQNTFYDIVAEFGPMEHTQAVDYVKKLMTKGRYSLDVWS</sequence>
<keyword id="KW-0007">Acetylation</keyword>
<keyword id="KW-0256">Endoplasmic reticulum</keyword>
<keyword id="KW-0274">FAD</keyword>
<keyword id="KW-0285">Flavoprotein</keyword>
<keyword id="KW-0288">FMN</keyword>
<keyword id="KW-0472">Membrane</keyword>
<keyword id="KW-0521">NADP</keyword>
<keyword id="KW-0560">Oxidoreductase</keyword>
<keyword id="KW-1185">Reference proteome</keyword>
<keyword id="KW-0812">Transmembrane</keyword>
<keyword id="KW-1133">Transmembrane helix</keyword>
<reference key="1">
    <citation type="journal article" date="1994" name="Biochim. Biophys. Acta">
        <title>Mouse NADPH-cytochrome P-450 oxidoreductase: molecular cloning and functional expression in yeast.</title>
        <authorList>
            <person name="Ohgiya S."/>
            <person name="Ishizaki K."/>
            <person name="Kamataki T."/>
            <person name="Shinriki N."/>
        </authorList>
    </citation>
    <scope>NUCLEOTIDE SEQUENCE [MRNA]</scope>
    <source>
        <strain>ddY</strain>
    </source>
</reference>
<reference key="2">
    <citation type="journal article" date="2004" name="Genome Res.">
        <title>The status, quality, and expansion of the NIH full-length cDNA project: the Mammalian Gene Collection (MGC).</title>
        <authorList>
            <consortium name="The MGC Project Team"/>
        </authorList>
    </citation>
    <scope>NUCLEOTIDE SEQUENCE [LARGE SCALE MRNA]</scope>
    <source>
        <strain>FVB/N</strain>
        <tissue>Mammary gland</tissue>
    </source>
</reference>
<reference key="3">
    <citation type="journal article" date="2010" name="Cell">
        <title>A tissue-specific atlas of mouse protein phosphorylation and expression.</title>
        <authorList>
            <person name="Huttlin E.L."/>
            <person name="Jedrychowski M.P."/>
            <person name="Elias J.E."/>
            <person name="Goswami T."/>
            <person name="Rad R."/>
            <person name="Beausoleil S.A."/>
            <person name="Villen J."/>
            <person name="Haas W."/>
            <person name="Sowa M.E."/>
            <person name="Gygi S.P."/>
        </authorList>
    </citation>
    <scope>IDENTIFICATION BY MASS SPECTROMETRY [LARGE SCALE ANALYSIS]</scope>
    <source>
        <tissue>Brain</tissue>
        <tissue>Brown adipose tissue</tissue>
        <tissue>Heart</tissue>
        <tissue>Kidney</tissue>
        <tissue>Liver</tissue>
        <tissue>Lung</tissue>
        <tissue>Pancreas</tissue>
        <tissue>Spleen</tissue>
        <tissue>Testis</tissue>
    </source>
</reference>
<evidence type="ECO:0000250" key="1">
    <source>
        <dbReference type="UniProtKB" id="P16435"/>
    </source>
</evidence>
<evidence type="ECO:0000255" key="2">
    <source>
        <dbReference type="HAMAP-Rule" id="MF_03212"/>
    </source>
</evidence>
<protein>
    <recommendedName>
        <fullName evidence="2">NADPH--cytochrome P450 reductase</fullName>
        <shortName evidence="2">CPR</shortName>
        <shortName evidence="2">P450R</shortName>
        <ecNumber evidence="2">1.6.2.4</ecNumber>
    </recommendedName>
</protein>
<accession>P37040</accession>
<dbReference type="EC" id="1.6.2.4" evidence="2"/>
<dbReference type="EMBL" id="D17571">
    <property type="protein sequence ID" value="BAA04496.1"/>
    <property type="molecule type" value="mRNA"/>
</dbReference>
<dbReference type="EMBL" id="BC031463">
    <property type="protein sequence ID" value="AAH31463.1"/>
    <property type="molecule type" value="mRNA"/>
</dbReference>
<dbReference type="CCDS" id="CCDS39318.1"/>
<dbReference type="RefSeq" id="NP_001415491.1">
    <property type="nucleotide sequence ID" value="NM_001428562.1"/>
</dbReference>
<dbReference type="RefSeq" id="NP_001415492.1">
    <property type="nucleotide sequence ID" value="NM_001428563.1"/>
</dbReference>
<dbReference type="RefSeq" id="NP_001415493.1">
    <property type="nucleotide sequence ID" value="NM_001428564.1"/>
</dbReference>
<dbReference type="RefSeq" id="NP_001415494.1">
    <property type="nucleotide sequence ID" value="NM_001428565.1"/>
</dbReference>
<dbReference type="RefSeq" id="NP_032924.1">
    <property type="nucleotide sequence ID" value="NM_008898.3"/>
</dbReference>
<dbReference type="RefSeq" id="XP_006504461.1">
    <property type="nucleotide sequence ID" value="XM_006504398.1"/>
</dbReference>
<dbReference type="RefSeq" id="XP_006504462.1">
    <property type="nucleotide sequence ID" value="XM_006504399.1"/>
</dbReference>
<dbReference type="SMR" id="P37040"/>
<dbReference type="BioGRID" id="202299">
    <property type="interactions" value="14"/>
</dbReference>
<dbReference type="FunCoup" id="P37040">
    <property type="interactions" value="3417"/>
</dbReference>
<dbReference type="IntAct" id="P37040">
    <property type="interactions" value="3"/>
</dbReference>
<dbReference type="MINT" id="P37040"/>
<dbReference type="STRING" id="10090.ENSMUSP00000005651"/>
<dbReference type="ChEMBL" id="CHEMBL4105861"/>
<dbReference type="GlyGen" id="P37040">
    <property type="glycosylation" value="3 sites, 1 N-linked glycan (1 site), 1 O-linked glycan (1 site)"/>
</dbReference>
<dbReference type="iPTMnet" id="P37040"/>
<dbReference type="MetOSite" id="P37040"/>
<dbReference type="PhosphoSitePlus" id="P37040"/>
<dbReference type="SwissPalm" id="P37040"/>
<dbReference type="jPOST" id="P37040"/>
<dbReference type="PaxDb" id="10090-ENSMUSP00000005651"/>
<dbReference type="PeptideAtlas" id="P37040"/>
<dbReference type="ProteomicsDB" id="252930"/>
<dbReference type="Pumba" id="P37040"/>
<dbReference type="Antibodypedia" id="2433">
    <property type="antibodies" value="463 antibodies from 34 providers"/>
</dbReference>
<dbReference type="DNASU" id="18984"/>
<dbReference type="Ensembl" id="ENSMUST00000005651.13">
    <property type="protein sequence ID" value="ENSMUSP00000005651.7"/>
    <property type="gene ID" value="ENSMUSG00000005514.15"/>
</dbReference>
<dbReference type="GeneID" id="18984"/>
<dbReference type="KEGG" id="mmu:18984"/>
<dbReference type="UCSC" id="uc008zyt.1">
    <property type="organism name" value="mouse"/>
</dbReference>
<dbReference type="AGR" id="MGI:97744"/>
<dbReference type="CTD" id="5447"/>
<dbReference type="MGI" id="MGI:97744">
    <property type="gene designation" value="Por"/>
</dbReference>
<dbReference type="VEuPathDB" id="HostDB:ENSMUSG00000005514"/>
<dbReference type="eggNOG" id="KOG1158">
    <property type="taxonomic scope" value="Eukaryota"/>
</dbReference>
<dbReference type="GeneTree" id="ENSGT00940000156847"/>
<dbReference type="HOGENOM" id="CLU_001570_17_3_1"/>
<dbReference type="InParanoid" id="P37040"/>
<dbReference type="OMA" id="QKRYQRD"/>
<dbReference type="OrthoDB" id="1856718at2759"/>
<dbReference type="PhylomeDB" id="P37040"/>
<dbReference type="TreeFam" id="TF105719"/>
<dbReference type="BioGRID-ORCS" id="18984">
    <property type="hits" value="1 hit in 78 CRISPR screens"/>
</dbReference>
<dbReference type="ChiTaRS" id="Por">
    <property type="organism name" value="mouse"/>
</dbReference>
<dbReference type="PRO" id="PR:P37040"/>
<dbReference type="Proteomes" id="UP000000589">
    <property type="component" value="Chromosome 5"/>
</dbReference>
<dbReference type="RNAct" id="P37040">
    <property type="molecule type" value="protein"/>
</dbReference>
<dbReference type="Bgee" id="ENSMUSG00000005514">
    <property type="expression patterns" value="Expressed in nasal cavity epithelium and 300 other cell types or tissues"/>
</dbReference>
<dbReference type="ExpressionAtlas" id="P37040">
    <property type="expression patterns" value="baseline and differential"/>
</dbReference>
<dbReference type="GO" id="GO:0005789">
    <property type="term" value="C:endoplasmic reticulum membrane"/>
    <property type="evidence" value="ECO:0007669"/>
    <property type="project" value="UniProtKB-SubCell"/>
</dbReference>
<dbReference type="GO" id="GO:0004128">
    <property type="term" value="F:cytochrome-b5 reductase activity, acting on NAD(P)H"/>
    <property type="evidence" value="ECO:0007669"/>
    <property type="project" value="Ensembl"/>
</dbReference>
<dbReference type="GO" id="GO:0009055">
    <property type="term" value="F:electron transfer activity"/>
    <property type="evidence" value="ECO:0007669"/>
    <property type="project" value="Ensembl"/>
</dbReference>
<dbReference type="GO" id="GO:0019899">
    <property type="term" value="F:enzyme binding"/>
    <property type="evidence" value="ECO:0007669"/>
    <property type="project" value="Ensembl"/>
</dbReference>
<dbReference type="GO" id="GO:0050660">
    <property type="term" value="F:flavin adenine dinucleotide binding"/>
    <property type="evidence" value="ECO:0007669"/>
    <property type="project" value="UniProtKB-UniRule"/>
</dbReference>
<dbReference type="GO" id="GO:0010181">
    <property type="term" value="F:FMN binding"/>
    <property type="evidence" value="ECO:0007669"/>
    <property type="project" value="UniProtKB-UniRule"/>
</dbReference>
<dbReference type="GO" id="GO:0016787">
    <property type="term" value="F:hydrolase activity"/>
    <property type="evidence" value="ECO:0007669"/>
    <property type="project" value="Ensembl"/>
</dbReference>
<dbReference type="GO" id="GO:0047726">
    <property type="term" value="F:iron-cytochrome-c reductase activity"/>
    <property type="evidence" value="ECO:0007669"/>
    <property type="project" value="Ensembl"/>
</dbReference>
<dbReference type="GO" id="GO:0050661">
    <property type="term" value="F:NADP binding"/>
    <property type="evidence" value="ECO:0007669"/>
    <property type="project" value="UniProtKB-UniRule"/>
</dbReference>
<dbReference type="GO" id="GO:0003958">
    <property type="term" value="F:NADPH-hemoprotein reductase activity"/>
    <property type="evidence" value="ECO:0007669"/>
    <property type="project" value="UniProtKB-UniRule"/>
</dbReference>
<dbReference type="GO" id="GO:0008941">
    <property type="term" value="F:nitric oxide dioxygenase NAD(P)H activity"/>
    <property type="evidence" value="ECO:0007669"/>
    <property type="project" value="Ensembl"/>
</dbReference>
<dbReference type="GO" id="GO:0016491">
    <property type="term" value="F:oxidoreductase activity"/>
    <property type="evidence" value="ECO:0000315"/>
    <property type="project" value="MGI"/>
</dbReference>
<dbReference type="GO" id="GO:0009437">
    <property type="term" value="P:carnitine metabolic process"/>
    <property type="evidence" value="ECO:0007669"/>
    <property type="project" value="Ensembl"/>
</dbReference>
<dbReference type="GO" id="GO:0071372">
    <property type="term" value="P:cellular response to follicle-stimulating hormone stimulus"/>
    <property type="evidence" value="ECO:0007669"/>
    <property type="project" value="Ensembl"/>
</dbReference>
<dbReference type="GO" id="GO:0071375">
    <property type="term" value="P:cellular response to peptide hormone stimulus"/>
    <property type="evidence" value="ECO:0007669"/>
    <property type="project" value="Ensembl"/>
</dbReference>
<dbReference type="GO" id="GO:0070988">
    <property type="term" value="P:demethylation"/>
    <property type="evidence" value="ECO:0007669"/>
    <property type="project" value="Ensembl"/>
</dbReference>
<dbReference type="GO" id="GO:0022900">
    <property type="term" value="P:electron transport chain"/>
    <property type="evidence" value="ECO:0007669"/>
    <property type="project" value="Ensembl"/>
</dbReference>
<dbReference type="GO" id="GO:0019395">
    <property type="term" value="P:fatty acid oxidation"/>
    <property type="evidence" value="ECO:0007669"/>
    <property type="project" value="Ensembl"/>
</dbReference>
<dbReference type="GO" id="GO:0009812">
    <property type="term" value="P:flavonoid metabolic process"/>
    <property type="evidence" value="ECO:0007669"/>
    <property type="project" value="Ensembl"/>
</dbReference>
<dbReference type="GO" id="GO:0043066">
    <property type="term" value="P:negative regulation of apoptotic process"/>
    <property type="evidence" value="ECO:0007669"/>
    <property type="project" value="Ensembl"/>
</dbReference>
<dbReference type="GO" id="GO:0043602">
    <property type="term" value="P:nitrate catabolic process"/>
    <property type="evidence" value="ECO:0007669"/>
    <property type="project" value="Ensembl"/>
</dbReference>
<dbReference type="GO" id="GO:0046210">
    <property type="term" value="P:nitric oxide catabolic process"/>
    <property type="evidence" value="ECO:0007669"/>
    <property type="project" value="Ensembl"/>
</dbReference>
<dbReference type="GO" id="GO:0090346">
    <property type="term" value="P:organofluorine metabolic process"/>
    <property type="evidence" value="ECO:0007669"/>
    <property type="project" value="Ensembl"/>
</dbReference>
<dbReference type="GO" id="GO:0032332">
    <property type="term" value="P:positive regulation of chondrocyte differentiation"/>
    <property type="evidence" value="ECO:0007669"/>
    <property type="project" value="Ensembl"/>
</dbReference>
<dbReference type="GO" id="GO:0061913">
    <property type="term" value="P:positive regulation of growth plate cartilage chondrocyte proliferation"/>
    <property type="evidence" value="ECO:0007669"/>
    <property type="project" value="Ensembl"/>
</dbReference>
<dbReference type="GO" id="GO:0045880">
    <property type="term" value="P:positive regulation of smoothened signaling pathway"/>
    <property type="evidence" value="ECO:0007669"/>
    <property type="project" value="Ensembl"/>
</dbReference>
<dbReference type="GO" id="GO:0090031">
    <property type="term" value="P:positive regulation of steroid hormone biosynthetic process"/>
    <property type="evidence" value="ECO:0007669"/>
    <property type="project" value="Ensembl"/>
</dbReference>
<dbReference type="GO" id="GO:0071548">
    <property type="term" value="P:response to dexamethasone"/>
    <property type="evidence" value="ECO:0007669"/>
    <property type="project" value="Ensembl"/>
</dbReference>
<dbReference type="GO" id="GO:0007584">
    <property type="term" value="P:response to nutrient"/>
    <property type="evidence" value="ECO:0007669"/>
    <property type="project" value="Ensembl"/>
</dbReference>
<dbReference type="GO" id="GO:0009410">
    <property type="term" value="P:response to xenobiotic stimulus"/>
    <property type="evidence" value="ECO:0007669"/>
    <property type="project" value="Ensembl"/>
</dbReference>
<dbReference type="CDD" id="cd06204">
    <property type="entry name" value="CYPOR"/>
    <property type="match status" value="1"/>
</dbReference>
<dbReference type="FunFam" id="1.20.990.10:FF:000001">
    <property type="entry name" value="NADPH--cytochrome P450 reductase"/>
    <property type="match status" value="1"/>
</dbReference>
<dbReference type="FunFam" id="3.40.50.360:FF:000009">
    <property type="entry name" value="NADPH--cytochrome P450 reductase"/>
    <property type="match status" value="1"/>
</dbReference>
<dbReference type="FunFam" id="3.40.50.80:FF:000001">
    <property type="entry name" value="NADPH--cytochrome P450 reductase 1"/>
    <property type="match status" value="1"/>
</dbReference>
<dbReference type="Gene3D" id="3.40.50.360">
    <property type="match status" value="1"/>
</dbReference>
<dbReference type="Gene3D" id="1.20.990.10">
    <property type="entry name" value="NADPH-cytochrome p450 Reductase, Chain A, domain 3"/>
    <property type="match status" value="1"/>
</dbReference>
<dbReference type="Gene3D" id="3.40.50.80">
    <property type="entry name" value="Nucleotide-binding domain of ferredoxin-NADP reductase (FNR) module"/>
    <property type="match status" value="1"/>
</dbReference>
<dbReference type="Gene3D" id="2.40.30.10">
    <property type="entry name" value="Translation factors"/>
    <property type="match status" value="1"/>
</dbReference>
<dbReference type="HAMAP" id="MF_03212">
    <property type="entry name" value="NCPR"/>
    <property type="match status" value="1"/>
</dbReference>
<dbReference type="InterPro" id="IPR003097">
    <property type="entry name" value="CysJ-like_FAD-binding"/>
</dbReference>
<dbReference type="InterPro" id="IPR017927">
    <property type="entry name" value="FAD-bd_FR_type"/>
</dbReference>
<dbReference type="InterPro" id="IPR001094">
    <property type="entry name" value="Flavdoxin-like"/>
</dbReference>
<dbReference type="InterPro" id="IPR008254">
    <property type="entry name" value="Flavodoxin/NO_synth"/>
</dbReference>
<dbReference type="InterPro" id="IPR001709">
    <property type="entry name" value="Flavoprot_Pyr_Nucl_cyt_Rdtase"/>
</dbReference>
<dbReference type="InterPro" id="IPR029039">
    <property type="entry name" value="Flavoprotein-like_sf"/>
</dbReference>
<dbReference type="InterPro" id="IPR039261">
    <property type="entry name" value="FNR_nucleotide-bd"/>
</dbReference>
<dbReference type="InterPro" id="IPR023173">
    <property type="entry name" value="NADPH_Cyt_P450_Rdtase_alpha"/>
</dbReference>
<dbReference type="InterPro" id="IPR001433">
    <property type="entry name" value="OxRdtase_FAD/NAD-bd"/>
</dbReference>
<dbReference type="InterPro" id="IPR023208">
    <property type="entry name" value="P450R"/>
</dbReference>
<dbReference type="InterPro" id="IPR017938">
    <property type="entry name" value="Riboflavin_synthase-like_b-brl"/>
</dbReference>
<dbReference type="PANTHER" id="PTHR19384:SF17">
    <property type="entry name" value="NADPH--CYTOCHROME P450 REDUCTASE"/>
    <property type="match status" value="1"/>
</dbReference>
<dbReference type="PANTHER" id="PTHR19384">
    <property type="entry name" value="NITRIC OXIDE SYNTHASE-RELATED"/>
    <property type="match status" value="1"/>
</dbReference>
<dbReference type="Pfam" id="PF00667">
    <property type="entry name" value="FAD_binding_1"/>
    <property type="match status" value="1"/>
</dbReference>
<dbReference type="Pfam" id="PF00258">
    <property type="entry name" value="Flavodoxin_1"/>
    <property type="match status" value="1"/>
</dbReference>
<dbReference type="Pfam" id="PF00175">
    <property type="entry name" value="NAD_binding_1"/>
    <property type="match status" value="1"/>
</dbReference>
<dbReference type="PIRSF" id="PIRSF000208">
    <property type="entry name" value="P450R"/>
    <property type="match status" value="1"/>
</dbReference>
<dbReference type="PRINTS" id="PR00369">
    <property type="entry name" value="FLAVODOXIN"/>
</dbReference>
<dbReference type="PRINTS" id="PR00371">
    <property type="entry name" value="FPNCR"/>
</dbReference>
<dbReference type="SUPFAM" id="SSF52343">
    <property type="entry name" value="Ferredoxin reductase-like, C-terminal NADP-linked domain"/>
    <property type="match status" value="1"/>
</dbReference>
<dbReference type="SUPFAM" id="SSF52218">
    <property type="entry name" value="Flavoproteins"/>
    <property type="match status" value="1"/>
</dbReference>
<dbReference type="SUPFAM" id="SSF63380">
    <property type="entry name" value="Riboflavin synthase domain-like"/>
    <property type="match status" value="1"/>
</dbReference>
<dbReference type="PROSITE" id="PS51384">
    <property type="entry name" value="FAD_FR"/>
    <property type="match status" value="1"/>
</dbReference>
<dbReference type="PROSITE" id="PS50902">
    <property type="entry name" value="FLAVODOXIN_LIKE"/>
    <property type="match status" value="1"/>
</dbReference>
<organism>
    <name type="scientific">Mus musculus</name>
    <name type="common">Mouse</name>
    <dbReference type="NCBI Taxonomy" id="10090"/>
    <lineage>
        <taxon>Eukaryota</taxon>
        <taxon>Metazoa</taxon>
        <taxon>Chordata</taxon>
        <taxon>Craniata</taxon>
        <taxon>Vertebrata</taxon>
        <taxon>Euteleostomi</taxon>
        <taxon>Mammalia</taxon>
        <taxon>Eutheria</taxon>
        <taxon>Euarchontoglires</taxon>
        <taxon>Glires</taxon>
        <taxon>Rodentia</taxon>
        <taxon>Myomorpha</taxon>
        <taxon>Muroidea</taxon>
        <taxon>Muridae</taxon>
        <taxon>Murinae</taxon>
        <taxon>Mus</taxon>
        <taxon>Mus</taxon>
    </lineage>
</organism>
<name>NCPR_MOUSE</name>
<gene>
    <name evidence="2" type="primary">Por</name>
</gene>
<feature type="initiator methionine" description="Removed" evidence="1">
    <location>
        <position position="1"/>
    </location>
</feature>
<feature type="chain" id="PRO_0000167597" description="NADPH--cytochrome P450 reductase">
    <location>
        <begin position="2"/>
        <end position="678"/>
    </location>
</feature>
<feature type="topological domain" description="Lumenal" evidence="2">
    <location>
        <begin position="2"/>
        <end position="22"/>
    </location>
</feature>
<feature type="transmembrane region" description="Helical" evidence="2">
    <location>
        <begin position="23"/>
        <end position="43"/>
    </location>
</feature>
<feature type="topological domain" description="Cytoplasmic" evidence="2">
    <location>
        <begin position="44"/>
        <end position="678"/>
    </location>
</feature>
<feature type="domain" description="Flavodoxin-like" evidence="2">
    <location>
        <begin position="80"/>
        <end position="224"/>
    </location>
</feature>
<feature type="domain" description="FAD-binding FR-type" evidence="2">
    <location>
        <begin position="279"/>
        <end position="521"/>
    </location>
</feature>
<feature type="binding site" evidence="2">
    <location>
        <begin position="86"/>
        <end position="91"/>
    </location>
    <ligand>
        <name>FMN</name>
        <dbReference type="ChEBI" id="CHEBI:58210"/>
    </ligand>
</feature>
<feature type="binding site" evidence="2">
    <location>
        <begin position="138"/>
        <end position="141"/>
    </location>
    <ligand>
        <name>FMN</name>
        <dbReference type="ChEBI" id="CHEBI:58210"/>
    </ligand>
</feature>
<feature type="binding site" evidence="2">
    <location>
        <begin position="173"/>
        <end position="182"/>
    </location>
    <ligand>
        <name>FMN</name>
        <dbReference type="ChEBI" id="CHEBI:58210"/>
    </ligand>
</feature>
<feature type="binding site" evidence="2">
    <location>
        <position position="208"/>
    </location>
    <ligand>
        <name>FMN</name>
        <dbReference type="ChEBI" id="CHEBI:58210"/>
    </ligand>
</feature>
<feature type="binding site" evidence="2">
    <location>
        <position position="298"/>
    </location>
    <ligand>
        <name>NADP(+)</name>
        <dbReference type="ChEBI" id="CHEBI:58349"/>
    </ligand>
</feature>
<feature type="binding site" evidence="2">
    <location>
        <position position="424"/>
    </location>
    <ligand>
        <name>FAD</name>
        <dbReference type="ChEBI" id="CHEBI:57692"/>
    </ligand>
</feature>
<feature type="binding site" evidence="2">
    <location>
        <begin position="454"/>
        <end position="457"/>
    </location>
    <ligand>
        <name>FAD</name>
        <dbReference type="ChEBI" id="CHEBI:57692"/>
    </ligand>
</feature>
<feature type="binding site" evidence="2">
    <location>
        <begin position="472"/>
        <end position="474"/>
    </location>
    <ligand>
        <name>FAD</name>
        <dbReference type="ChEBI" id="CHEBI:57692"/>
    </ligand>
</feature>
<feature type="binding site" evidence="2">
    <location>
        <position position="478"/>
    </location>
    <ligand>
        <name>FAD</name>
        <dbReference type="ChEBI" id="CHEBI:57692"/>
    </ligand>
</feature>
<feature type="binding site" evidence="2">
    <location>
        <begin position="488"/>
        <end position="491"/>
    </location>
    <ligand>
        <name>FAD</name>
        <dbReference type="ChEBI" id="CHEBI:57692"/>
    </ligand>
</feature>
<feature type="binding site" evidence="2">
    <location>
        <position position="535"/>
    </location>
    <ligand>
        <name>NADP(+)</name>
        <dbReference type="ChEBI" id="CHEBI:58349"/>
    </ligand>
</feature>
<feature type="binding site" evidence="2">
    <location>
        <begin position="596"/>
        <end position="597"/>
    </location>
    <ligand>
        <name>NADP(+)</name>
        <dbReference type="ChEBI" id="CHEBI:58349"/>
    </ligand>
</feature>
<feature type="binding site" evidence="2">
    <location>
        <begin position="602"/>
        <end position="606"/>
    </location>
    <ligand>
        <name>NADP(+)</name>
        <dbReference type="ChEBI" id="CHEBI:58349"/>
    </ligand>
</feature>
<feature type="binding site" evidence="2">
    <location>
        <position position="639"/>
    </location>
    <ligand>
        <name>NADP(+)</name>
        <dbReference type="ChEBI" id="CHEBI:58349"/>
    </ligand>
</feature>
<feature type="binding site" evidence="2">
    <location>
        <position position="677"/>
    </location>
    <ligand>
        <name>FAD</name>
        <dbReference type="ChEBI" id="CHEBI:57692"/>
    </ligand>
</feature>
<feature type="modified residue" description="N-acetylglycine" evidence="1">
    <location>
        <position position="2"/>
    </location>
</feature>
<comment type="function">
    <text evidence="2">This enzyme is required for electron transfer from NADP to cytochrome P450 in microsomes. It can also provide electron transfer to heme oxygenase and cytochrome B5.</text>
</comment>
<comment type="catalytic activity">
    <reaction evidence="2">
        <text>2 oxidized [cytochrome P450] + NADPH = 2 reduced [cytochrome P450] + NADP(+) + H(+)</text>
        <dbReference type="Rhea" id="RHEA:24040"/>
        <dbReference type="Rhea" id="RHEA-COMP:14627"/>
        <dbReference type="Rhea" id="RHEA-COMP:14628"/>
        <dbReference type="ChEBI" id="CHEBI:15378"/>
        <dbReference type="ChEBI" id="CHEBI:55376"/>
        <dbReference type="ChEBI" id="CHEBI:57783"/>
        <dbReference type="ChEBI" id="CHEBI:58349"/>
        <dbReference type="ChEBI" id="CHEBI:60344"/>
        <dbReference type="EC" id="1.6.2.4"/>
    </reaction>
</comment>
<comment type="cofactor">
    <cofactor evidence="2">
        <name>FAD</name>
        <dbReference type="ChEBI" id="CHEBI:57692"/>
    </cofactor>
    <text evidence="2">Binds 1 FAD per monomer.</text>
</comment>
<comment type="cofactor">
    <cofactor evidence="2">
        <name>FMN</name>
        <dbReference type="ChEBI" id="CHEBI:58210"/>
    </cofactor>
    <text evidence="2">Binds 1 FMN per monomer.</text>
</comment>
<comment type="subcellular location">
    <subcellularLocation>
        <location evidence="2">Endoplasmic reticulum membrane</location>
        <topology evidence="2">Single-pass membrane protein</topology>
        <orientation evidence="2">Cytoplasmic side</orientation>
    </subcellularLocation>
</comment>
<comment type="similarity">
    <text evidence="2">Belongs to the NADPH--cytochrome P450 reductase family.</text>
</comment>
<comment type="similarity">
    <text evidence="2">In the N-terminal section; belongs to the flavodoxin family.</text>
</comment>
<comment type="similarity">
    <text evidence="2">In the C-terminal section; belongs to the flavoprotein pyridine nucleotide cytochrome reductase family.</text>
</comment>
<proteinExistence type="evidence at protein level"/>